<proteinExistence type="inferred from homology"/>
<feature type="chain" id="PRO_1000200457" description="5-oxoprolinase subunit A">
    <location>
        <begin position="1"/>
        <end position="244"/>
    </location>
</feature>
<comment type="function">
    <text evidence="1">Catalyzes the cleavage of 5-oxoproline to form L-glutamate coupled to the hydrolysis of ATP to ADP and inorganic phosphate.</text>
</comment>
<comment type="catalytic activity">
    <reaction evidence="1">
        <text>5-oxo-L-proline + ATP + 2 H2O = L-glutamate + ADP + phosphate + H(+)</text>
        <dbReference type="Rhea" id="RHEA:10348"/>
        <dbReference type="ChEBI" id="CHEBI:15377"/>
        <dbReference type="ChEBI" id="CHEBI:15378"/>
        <dbReference type="ChEBI" id="CHEBI:29985"/>
        <dbReference type="ChEBI" id="CHEBI:30616"/>
        <dbReference type="ChEBI" id="CHEBI:43474"/>
        <dbReference type="ChEBI" id="CHEBI:58402"/>
        <dbReference type="ChEBI" id="CHEBI:456216"/>
        <dbReference type="EC" id="3.5.2.9"/>
    </reaction>
</comment>
<comment type="subunit">
    <text evidence="1">Forms a complex composed of PxpA, PxpB and PxpC.</text>
</comment>
<comment type="similarity">
    <text evidence="1">Belongs to the LamB/PxpA family.</text>
</comment>
<name>PXPA_ECO55</name>
<evidence type="ECO:0000255" key="1">
    <source>
        <dbReference type="HAMAP-Rule" id="MF_00691"/>
    </source>
</evidence>
<keyword id="KW-0067">ATP-binding</keyword>
<keyword id="KW-0378">Hydrolase</keyword>
<keyword id="KW-0547">Nucleotide-binding</keyword>
<keyword id="KW-1185">Reference proteome</keyword>
<reference key="1">
    <citation type="journal article" date="2009" name="PLoS Genet.">
        <title>Organised genome dynamics in the Escherichia coli species results in highly diverse adaptive paths.</title>
        <authorList>
            <person name="Touchon M."/>
            <person name="Hoede C."/>
            <person name="Tenaillon O."/>
            <person name="Barbe V."/>
            <person name="Baeriswyl S."/>
            <person name="Bidet P."/>
            <person name="Bingen E."/>
            <person name="Bonacorsi S."/>
            <person name="Bouchier C."/>
            <person name="Bouvet O."/>
            <person name="Calteau A."/>
            <person name="Chiapello H."/>
            <person name="Clermont O."/>
            <person name="Cruveiller S."/>
            <person name="Danchin A."/>
            <person name="Diard M."/>
            <person name="Dossat C."/>
            <person name="Karoui M.E."/>
            <person name="Frapy E."/>
            <person name="Garry L."/>
            <person name="Ghigo J.M."/>
            <person name="Gilles A.M."/>
            <person name="Johnson J."/>
            <person name="Le Bouguenec C."/>
            <person name="Lescat M."/>
            <person name="Mangenot S."/>
            <person name="Martinez-Jehanne V."/>
            <person name="Matic I."/>
            <person name="Nassif X."/>
            <person name="Oztas S."/>
            <person name="Petit M.A."/>
            <person name="Pichon C."/>
            <person name="Rouy Z."/>
            <person name="Ruf C.S."/>
            <person name="Schneider D."/>
            <person name="Tourret J."/>
            <person name="Vacherie B."/>
            <person name="Vallenet D."/>
            <person name="Medigue C."/>
            <person name="Rocha E.P.C."/>
            <person name="Denamur E."/>
        </authorList>
    </citation>
    <scope>NUCLEOTIDE SEQUENCE [LARGE SCALE GENOMIC DNA]</scope>
    <source>
        <strain>55989 / EAEC</strain>
    </source>
</reference>
<accession>B7LAB9</accession>
<sequence>MKIDLNADLGEGCASDAELLTLVSSANIACGFHAGDAQTMQACVREAIKNGVAIGAHPSFPDRENFGRSAMQLPPETVYAQTLYQIGALATIARAQGGVMRHVKPHGMLYNQAAKEAQLADAIARAVYACDPALVLVGLAGSELIRAGKQYGLTTREEVFADRGYQADGSLVPRSQPGALIENEEQALAQTLEMVQHGRVKSITGEWATVTAQTVCLHGDGEHALAFARRLRSTFAEKEIVVAA</sequence>
<protein>
    <recommendedName>
        <fullName evidence="1">5-oxoprolinase subunit A</fullName>
        <shortName evidence="1">5-OPase subunit A</shortName>
        <ecNumber evidence="1">3.5.2.9</ecNumber>
    </recommendedName>
    <alternativeName>
        <fullName evidence="1">5-oxoprolinase (ATP-hydrolyzing) subunit A</fullName>
    </alternativeName>
</protein>
<gene>
    <name evidence="1" type="primary">pxpA</name>
    <name type="ordered locus">EC55989_0696</name>
</gene>
<organism>
    <name type="scientific">Escherichia coli (strain 55989 / EAEC)</name>
    <dbReference type="NCBI Taxonomy" id="585055"/>
    <lineage>
        <taxon>Bacteria</taxon>
        <taxon>Pseudomonadati</taxon>
        <taxon>Pseudomonadota</taxon>
        <taxon>Gammaproteobacteria</taxon>
        <taxon>Enterobacterales</taxon>
        <taxon>Enterobacteriaceae</taxon>
        <taxon>Escherichia</taxon>
    </lineage>
</organism>
<dbReference type="EC" id="3.5.2.9" evidence="1"/>
<dbReference type="EMBL" id="CU928145">
    <property type="protein sequence ID" value="CAU96566.1"/>
    <property type="molecule type" value="Genomic_DNA"/>
</dbReference>
<dbReference type="RefSeq" id="WP_000687142.1">
    <property type="nucleotide sequence ID" value="NC_011748.1"/>
</dbReference>
<dbReference type="SMR" id="B7LAB9"/>
<dbReference type="GeneID" id="75205545"/>
<dbReference type="KEGG" id="eck:EC55989_0696"/>
<dbReference type="HOGENOM" id="CLU_069535_0_0_6"/>
<dbReference type="Proteomes" id="UP000000746">
    <property type="component" value="Chromosome"/>
</dbReference>
<dbReference type="GO" id="GO:0017168">
    <property type="term" value="F:5-oxoprolinase (ATP-hydrolyzing) activity"/>
    <property type="evidence" value="ECO:0007669"/>
    <property type="project" value="UniProtKB-UniRule"/>
</dbReference>
<dbReference type="GO" id="GO:0005524">
    <property type="term" value="F:ATP binding"/>
    <property type="evidence" value="ECO:0007669"/>
    <property type="project" value="UniProtKB-UniRule"/>
</dbReference>
<dbReference type="GO" id="GO:0005975">
    <property type="term" value="P:carbohydrate metabolic process"/>
    <property type="evidence" value="ECO:0007669"/>
    <property type="project" value="InterPro"/>
</dbReference>
<dbReference type="CDD" id="cd10800">
    <property type="entry name" value="LamB_YcsF_YbgL_like"/>
    <property type="match status" value="1"/>
</dbReference>
<dbReference type="Gene3D" id="3.20.20.370">
    <property type="entry name" value="Glycoside hydrolase/deacetylase"/>
    <property type="match status" value="1"/>
</dbReference>
<dbReference type="HAMAP" id="MF_00691">
    <property type="entry name" value="PxpA"/>
    <property type="match status" value="1"/>
</dbReference>
<dbReference type="InterPro" id="IPR011330">
    <property type="entry name" value="Glyco_hydro/deAcase_b/a-brl"/>
</dbReference>
<dbReference type="InterPro" id="IPR005501">
    <property type="entry name" value="LamB/YcsF/PxpA-like"/>
</dbReference>
<dbReference type="NCBIfam" id="NF003812">
    <property type="entry name" value="PRK05406.1-1"/>
    <property type="match status" value="1"/>
</dbReference>
<dbReference type="NCBIfam" id="NF003814">
    <property type="entry name" value="PRK05406.1-3"/>
    <property type="match status" value="1"/>
</dbReference>
<dbReference type="NCBIfam" id="NF003815">
    <property type="entry name" value="PRK05406.1-4"/>
    <property type="match status" value="1"/>
</dbReference>
<dbReference type="NCBIfam" id="NF003816">
    <property type="entry name" value="PRK05406.1-5"/>
    <property type="match status" value="1"/>
</dbReference>
<dbReference type="PANTHER" id="PTHR30292:SF0">
    <property type="entry name" value="5-OXOPROLINASE SUBUNIT A"/>
    <property type="match status" value="1"/>
</dbReference>
<dbReference type="PANTHER" id="PTHR30292">
    <property type="entry name" value="UNCHARACTERIZED PROTEIN YBGL-RELATED"/>
    <property type="match status" value="1"/>
</dbReference>
<dbReference type="Pfam" id="PF03746">
    <property type="entry name" value="LamB_YcsF"/>
    <property type="match status" value="1"/>
</dbReference>
<dbReference type="SUPFAM" id="SSF88713">
    <property type="entry name" value="Glycoside hydrolase/deacetylase"/>
    <property type="match status" value="1"/>
</dbReference>